<comment type="catalytic activity">
    <reaction evidence="1">
        <text>urea + 2 H2O + H(+) = hydrogencarbonate + 2 NH4(+)</text>
        <dbReference type="Rhea" id="RHEA:20557"/>
        <dbReference type="ChEBI" id="CHEBI:15377"/>
        <dbReference type="ChEBI" id="CHEBI:15378"/>
        <dbReference type="ChEBI" id="CHEBI:16199"/>
        <dbReference type="ChEBI" id="CHEBI:17544"/>
        <dbReference type="ChEBI" id="CHEBI:28938"/>
        <dbReference type="EC" id="3.5.1.5"/>
    </reaction>
</comment>
<comment type="pathway">
    <text evidence="1">Nitrogen metabolism; urea degradation; CO(2) and NH(3) from urea (urease route): step 1/1.</text>
</comment>
<comment type="subunit">
    <text evidence="1">Heterohexamer of 3 UreA (alpha) and 3 UreB (beta) subunits.</text>
</comment>
<comment type="subcellular location">
    <subcellularLocation>
        <location evidence="1">Cytoplasm</location>
    </subcellularLocation>
</comment>
<comment type="similarity">
    <text evidence="1">In the N-terminal section; belongs to the urease gamma subunit family.</text>
</comment>
<comment type="similarity">
    <text evidence="1">In the C-terminal section; belongs to the urease beta subunit family.</text>
</comment>
<comment type="caution">
    <text evidence="2">The orthologous protein is known as the gamma/beta subunit (UreAB) in most other bacteria.</text>
</comment>
<comment type="sequence caution" evidence="2">
    <conflict type="erroneous initiation">
        <sequence resource="EMBL-CDS" id="AAC72748"/>
    </conflict>
</comment>
<comment type="sequence caution" evidence="2">
    <conflict type="erroneous initiation">
        <sequence resource="EMBL-CDS" id="AAC72750"/>
    </conflict>
</comment>
<comment type="sequence caution" evidence="2">
    <conflict type="erroneous initiation">
        <sequence resource="EMBL-CDS" id="AAC72752"/>
    </conflict>
</comment>
<sequence>MRLTPKELDKLMLHYAGALAKSRKERGIKLNYVESIALISMEIMELAREGNKSVAELMQQGREILKADEVMEGVASMVNEVQVEVSFPDGTKLVTIHNPIEDNGKLTPGEYILKDEDITLNANKESISIKVTHKGDRPIQVGSHFHFFEVNALLEFDRAQAFGKRLDIASGTSVRFEPGEEKNVNLIDFGGKQKIIGFNDLTNAHINKENKEQCLANAAQKHFIH</sequence>
<feature type="chain" id="PRO_0000098072" description="Urease subunit alpha">
    <location>
        <begin position="1"/>
        <end position="225"/>
    </location>
</feature>
<feature type="region of interest" description="Urease gamma">
    <location>
        <begin position="1"/>
        <end position="102"/>
    </location>
</feature>
<feature type="region of interest" description="Urease beta">
    <location>
        <begin position="103"/>
        <end position="225"/>
    </location>
</feature>
<feature type="sequence conflict" description="In Ref. 3; AAC72750/AAC72752." evidence="2" ref="3">
    <original>N</original>
    <variation>D</variation>
    <location>
        <position position="79"/>
    </location>
</feature>
<feature type="sequence conflict" description="In Ref. 3; AAC72750." evidence="2" ref="3">
    <original>G</original>
    <variation>S</variation>
    <location>
        <position position="104"/>
    </location>
</feature>
<accession>Q93PJ5</accession>
<accession>Q9R8R2</accession>
<accession>Q9R8R4</accession>
<accession>Q9ZHF2</accession>
<proteinExistence type="inferred from homology"/>
<protein>
    <recommendedName>
        <fullName evidence="1">Urease subunit alpha</fullName>
        <ecNumber evidence="1">3.5.1.5</ecNumber>
    </recommendedName>
    <alternativeName>
        <fullName evidence="1">Urea amidohydrolase subunit alpha</fullName>
    </alternativeName>
</protein>
<gene>
    <name evidence="1" type="primary">ureA</name>
    <name type="ordered locus">HH_0407</name>
</gene>
<evidence type="ECO:0000255" key="1">
    <source>
        <dbReference type="HAMAP-Rule" id="MF_01955"/>
    </source>
</evidence>
<evidence type="ECO:0000305" key="2"/>
<organism>
    <name type="scientific">Helicobacter hepaticus (strain ATCC 51449 / 3B1)</name>
    <dbReference type="NCBI Taxonomy" id="235279"/>
    <lineage>
        <taxon>Bacteria</taxon>
        <taxon>Pseudomonadati</taxon>
        <taxon>Campylobacterota</taxon>
        <taxon>Epsilonproteobacteria</taxon>
        <taxon>Campylobacterales</taxon>
        <taxon>Helicobacteraceae</taxon>
        <taxon>Helicobacter</taxon>
    </lineage>
</organism>
<name>URE23_HELHP</name>
<keyword id="KW-0963">Cytoplasm</keyword>
<keyword id="KW-0378">Hydrolase</keyword>
<keyword id="KW-1185">Reference proteome</keyword>
<dbReference type="EC" id="3.5.1.5" evidence="1"/>
<dbReference type="EMBL" id="AF332656">
    <property type="protein sequence ID" value="AAK69198.1"/>
    <property type="molecule type" value="Genomic_DNA"/>
</dbReference>
<dbReference type="EMBL" id="AE017125">
    <property type="protein sequence ID" value="AAP77004.1"/>
    <property type="molecule type" value="Genomic_DNA"/>
</dbReference>
<dbReference type="EMBL" id="AF066862">
    <property type="protein sequence ID" value="AAC72748.1"/>
    <property type="status" value="ALT_INIT"/>
    <property type="molecule type" value="Genomic_DNA"/>
</dbReference>
<dbReference type="EMBL" id="AF066863">
    <property type="protein sequence ID" value="AAC72750.1"/>
    <property type="status" value="ALT_INIT"/>
    <property type="molecule type" value="Genomic_DNA"/>
</dbReference>
<dbReference type="EMBL" id="AF066864">
    <property type="protein sequence ID" value="AAC72752.1"/>
    <property type="status" value="ALT_INIT"/>
    <property type="molecule type" value="Genomic_DNA"/>
</dbReference>
<dbReference type="RefSeq" id="WP_011115249.1">
    <property type="nucleotide sequence ID" value="NC_004917.1"/>
</dbReference>
<dbReference type="SMR" id="Q93PJ5"/>
<dbReference type="STRING" id="235279.HH_0407"/>
<dbReference type="KEGG" id="hhe:HH_0407"/>
<dbReference type="eggNOG" id="COG0831">
    <property type="taxonomic scope" value="Bacteria"/>
</dbReference>
<dbReference type="eggNOG" id="COG0832">
    <property type="taxonomic scope" value="Bacteria"/>
</dbReference>
<dbReference type="HOGENOM" id="CLU_000980_3_0_7"/>
<dbReference type="OrthoDB" id="9797217at2"/>
<dbReference type="BRENDA" id="3.5.1.5">
    <property type="organism ID" value="7587"/>
</dbReference>
<dbReference type="UniPathway" id="UPA00258">
    <property type="reaction ID" value="UER00370"/>
</dbReference>
<dbReference type="Proteomes" id="UP000002495">
    <property type="component" value="Chromosome"/>
</dbReference>
<dbReference type="GO" id="GO:0035550">
    <property type="term" value="C:urease complex"/>
    <property type="evidence" value="ECO:0007669"/>
    <property type="project" value="InterPro"/>
</dbReference>
<dbReference type="GO" id="GO:0016151">
    <property type="term" value="F:nickel cation binding"/>
    <property type="evidence" value="ECO:0007669"/>
    <property type="project" value="InterPro"/>
</dbReference>
<dbReference type="GO" id="GO:0009039">
    <property type="term" value="F:urease activity"/>
    <property type="evidence" value="ECO:0007669"/>
    <property type="project" value="UniProtKB-UniRule"/>
</dbReference>
<dbReference type="GO" id="GO:0071281">
    <property type="term" value="P:cellular response to iron ion"/>
    <property type="evidence" value="ECO:0000270"/>
    <property type="project" value="CollecTF"/>
</dbReference>
<dbReference type="GO" id="GO:0043419">
    <property type="term" value="P:urea catabolic process"/>
    <property type="evidence" value="ECO:0007669"/>
    <property type="project" value="UniProtKB-UniRule"/>
</dbReference>
<dbReference type="CDD" id="cd00407">
    <property type="entry name" value="Urease_beta"/>
    <property type="match status" value="1"/>
</dbReference>
<dbReference type="CDD" id="cd00390">
    <property type="entry name" value="Urease_gamma"/>
    <property type="match status" value="1"/>
</dbReference>
<dbReference type="FunFam" id="3.30.280.10:FF:000001">
    <property type="entry name" value="Urease subunit alpha"/>
    <property type="match status" value="1"/>
</dbReference>
<dbReference type="FunFam" id="2.10.150.10:FF:000001">
    <property type="entry name" value="Urease subunit beta"/>
    <property type="match status" value="1"/>
</dbReference>
<dbReference type="Gene3D" id="2.10.150.10">
    <property type="entry name" value="Urease, beta subunit"/>
    <property type="match status" value="1"/>
</dbReference>
<dbReference type="Gene3D" id="3.30.280.10">
    <property type="entry name" value="Urease, gamma-like subunit"/>
    <property type="match status" value="1"/>
</dbReference>
<dbReference type="HAMAP" id="MF_01954">
    <property type="entry name" value="Urease_beta"/>
    <property type="match status" value="1"/>
</dbReference>
<dbReference type="HAMAP" id="MF_01955">
    <property type="entry name" value="Urease_beta_gamma"/>
    <property type="match status" value="1"/>
</dbReference>
<dbReference type="InterPro" id="IPR002019">
    <property type="entry name" value="Urease_beta-like"/>
</dbReference>
<dbReference type="InterPro" id="IPR036461">
    <property type="entry name" value="Urease_betasu_sf"/>
</dbReference>
<dbReference type="InterPro" id="IPR008223">
    <property type="entry name" value="Urease_gamma-beta_su"/>
</dbReference>
<dbReference type="InterPro" id="IPR002026">
    <property type="entry name" value="Urease_gamma/gamma-beta_su"/>
</dbReference>
<dbReference type="InterPro" id="IPR036463">
    <property type="entry name" value="Urease_gamma_sf"/>
</dbReference>
<dbReference type="InterPro" id="IPR050069">
    <property type="entry name" value="Urease_subunit"/>
</dbReference>
<dbReference type="NCBIfam" id="NF009671">
    <property type="entry name" value="PRK13192.1"/>
    <property type="match status" value="1"/>
</dbReference>
<dbReference type="NCBIfam" id="NF009682">
    <property type="entry name" value="PRK13203.1"/>
    <property type="match status" value="1"/>
</dbReference>
<dbReference type="NCBIfam" id="NF009712">
    <property type="entry name" value="PRK13241.1"/>
    <property type="match status" value="1"/>
</dbReference>
<dbReference type="NCBIfam" id="NF010592">
    <property type="entry name" value="PRK13986.1"/>
    <property type="match status" value="1"/>
</dbReference>
<dbReference type="NCBIfam" id="TIGR00192">
    <property type="entry name" value="urease_beta"/>
    <property type="match status" value="1"/>
</dbReference>
<dbReference type="NCBIfam" id="TIGR00193">
    <property type="entry name" value="urease_gam"/>
    <property type="match status" value="1"/>
</dbReference>
<dbReference type="PANTHER" id="PTHR33569">
    <property type="entry name" value="UREASE"/>
    <property type="match status" value="1"/>
</dbReference>
<dbReference type="PANTHER" id="PTHR33569:SF1">
    <property type="entry name" value="UREASE"/>
    <property type="match status" value="1"/>
</dbReference>
<dbReference type="Pfam" id="PF00699">
    <property type="entry name" value="Urease_beta"/>
    <property type="match status" value="1"/>
</dbReference>
<dbReference type="Pfam" id="PF00547">
    <property type="entry name" value="Urease_gamma"/>
    <property type="match status" value="1"/>
</dbReference>
<dbReference type="PIRSF" id="PIRSF001225">
    <property type="entry name" value="Urease_gammabeta"/>
    <property type="match status" value="1"/>
</dbReference>
<dbReference type="SUPFAM" id="SSF51278">
    <property type="entry name" value="Urease, beta-subunit"/>
    <property type="match status" value="1"/>
</dbReference>
<dbReference type="SUPFAM" id="SSF54111">
    <property type="entry name" value="Urease, gamma-subunit"/>
    <property type="match status" value="1"/>
</dbReference>
<reference key="1">
    <citation type="journal article" date="2001" name="Infect. Immun.">
        <title>Cloning, expression, and catalytic activity of Helicobacter hepaticus urease.</title>
        <authorList>
            <person name="Beckwith C.S."/>
            <person name="McGee D.J."/>
            <person name="Mobley H.L.T."/>
            <person name="Riley L.K."/>
        </authorList>
    </citation>
    <scope>NUCLEOTIDE SEQUENCE [GENOMIC DNA]</scope>
    <source>
        <strain>MU94-1</strain>
    </source>
</reference>
<reference key="2">
    <citation type="journal article" date="2003" name="Proc. Natl. Acad. Sci. U.S.A.">
        <title>The complete genome sequence of the carcinogenic bacterium Helicobacter hepaticus.</title>
        <authorList>
            <person name="Suerbaum S."/>
            <person name="Josenhans C."/>
            <person name="Sterzenbach T."/>
            <person name="Drescher B."/>
            <person name="Brandt P."/>
            <person name="Bell M."/>
            <person name="Droege M."/>
            <person name="Fartmann B."/>
            <person name="Fischer H.-P."/>
            <person name="Ge Z."/>
            <person name="Hoerster A."/>
            <person name="Holland R."/>
            <person name="Klein K."/>
            <person name="Koenig J."/>
            <person name="Macko L."/>
            <person name="Mendz G.L."/>
            <person name="Nyakatura G."/>
            <person name="Schauer D.B."/>
            <person name="Shen Z."/>
            <person name="Weber J."/>
            <person name="Frosch M."/>
            <person name="Fox J.G."/>
        </authorList>
    </citation>
    <scope>NUCLEOTIDE SEQUENCE [LARGE SCALE GENOMIC DNA]</scope>
    <source>
        <strain>ATCC 51449 / 3B1</strain>
    </source>
</reference>
<reference key="3">
    <citation type="journal article" date="1998" name="J. Clin. Microbiol.">
        <title>Development of a PCR-restriction fragment length polymorphism assay using the nucleotide sequence of the Helicobacter hepaticus urease structural genes ureAB.</title>
        <authorList>
            <person name="Shen Z."/>
            <person name="Schauer D.B."/>
            <person name="Mobley H.L.T."/>
            <person name="Fox J.G."/>
        </authorList>
    </citation>
    <scope>NUCLEOTIDE SEQUENCE [GENOMIC DNA] OF 4-225</scope>
    <source>
        <strain>ATCC 51449 / 3B1</strain>
        <strain>MIT 95-1971</strain>
        <strain>MIT 96-284</strain>
    </source>
</reference>